<comment type="function">
    <text evidence="1 3 4 5 6">Mediates the transient calcium-dependent interaction of PYR/PYL/RCAR abscisic acid (ABA) receptors with the plasma membrane and thus regulates ABA sensitivity (By similarity). Stimulates the GTPase/ATPase activities of YCHF1, and regulates its subcellular localization (PubMed:19086295, PubMed:20876569, PubMed:23550829). Binds phospholipids in a Ca(2+)-independent manner (PubMed:20876569). Promotes tolerance towards salinity stress by limiting the accumulation of reactive oxygen species (ROS) (PubMed:19086295, PubMed:23550829). Promotes resistance to bacterial pathogens, such as Xanthomonas oryzae pv. oryzae and Pseudomonas syringae pv. tomato strain DC3000 (PubMed:19086295). Binding to YCHF1 is required for its role in stimulating defense responses and the ability to alleviate salt stress (PubMed:26286751).</text>
</comment>
<comment type="subunit">
    <text evidence="1 3 4 5">Binds to PYR/PYL/RCAR abscisic acid intracellular receptors in an ABA-independent manner, both at the plasma membrane and in the nucleus (By similarity). Interacts with YchF1 (PubMed:19086295, PubMed:20876569, PubMed:23550829).</text>
</comment>
<comment type="subcellular location">
    <subcellularLocation>
        <location evidence="4 5">Cell membrane</location>
    </subcellularLocation>
    <subcellularLocation>
        <location evidence="1">Nucleus</location>
    </subcellularLocation>
    <subcellularLocation>
        <location evidence="4 5">Cytoplasm</location>
        <location evidence="4 5">Cytosol</location>
    </subcellularLocation>
    <text evidence="4 5">Localized mainly in the cytosol under NaCl treatment, but translocates to the plasma membrane upon wounding.</text>
</comment>
<comment type="induction">
    <text evidence="3">By wounding.</text>
</comment>
<comment type="similarity">
    <text evidence="9">Belongs to the plant CAR protein family.</text>
</comment>
<protein>
    <recommendedName>
        <fullName evidence="8">GTPase activating protein 1</fullName>
        <shortName evidence="8">OsGAP1</shortName>
    </recommendedName>
    <alternativeName>
        <fullName evidence="7">G-protein binding protein 1</fullName>
        <shortName evidence="7">OsGPBP1</shortName>
    </alternativeName>
</protein>
<name>GAP1_ORYSJ</name>
<proteinExistence type="evidence at protein level"/>
<keyword id="KW-0002">3D-structure</keyword>
<keyword id="KW-0938">Abscisic acid signaling pathway</keyword>
<keyword id="KW-0106">Calcium</keyword>
<keyword id="KW-1003">Cell membrane</keyword>
<keyword id="KW-0963">Cytoplasm</keyword>
<keyword id="KW-0343">GTPase activation</keyword>
<keyword id="KW-0446">Lipid-binding</keyword>
<keyword id="KW-0472">Membrane</keyword>
<keyword id="KW-0479">Metal-binding</keyword>
<keyword id="KW-0539">Nucleus</keyword>
<keyword id="KW-0611">Plant defense</keyword>
<keyword id="KW-1185">Reference proteome</keyword>
<evidence type="ECO:0000250" key="1">
    <source>
        <dbReference type="UniProtKB" id="Q9LVH4"/>
    </source>
</evidence>
<evidence type="ECO:0000255" key="2">
    <source>
        <dbReference type="PROSITE-ProRule" id="PRU00041"/>
    </source>
</evidence>
<evidence type="ECO:0000269" key="3">
    <source>
    </source>
</evidence>
<evidence type="ECO:0000269" key="4">
    <source>
    </source>
</evidence>
<evidence type="ECO:0000269" key="5">
    <source>
    </source>
</evidence>
<evidence type="ECO:0000269" key="6">
    <source>
    </source>
</evidence>
<evidence type="ECO:0000303" key="7">
    <source>
    </source>
</evidence>
<evidence type="ECO:0000303" key="8">
    <source>
    </source>
</evidence>
<evidence type="ECO:0000305" key="9"/>
<evidence type="ECO:0000312" key="10">
    <source>
        <dbReference type="EMBL" id="BAD15699.1"/>
    </source>
</evidence>
<evidence type="ECO:0000312" key="11">
    <source>
        <dbReference type="EMBL" id="BAD16390.1"/>
    </source>
</evidence>
<evidence type="ECO:0000312" key="12">
    <source>
        <dbReference type="EMBL" id="BAF08623.1"/>
    </source>
</evidence>
<evidence type="ECO:0000312" key="13">
    <source>
        <dbReference type="EMBL" id="EAZ22831.1"/>
    </source>
</evidence>
<evidence type="ECO:0000312" key="14">
    <source>
        <dbReference type="Proteomes" id="UP000059680"/>
    </source>
</evidence>
<evidence type="ECO:0007829" key="15">
    <source>
        <dbReference type="PDB" id="4RJ9"/>
    </source>
</evidence>
<sequence length="165" mass="18548">MLGHLVGLVKVRVVRGVNLAVRDLRSSDPYVIVRMGKQKLKTRVIKKTTNPEWNDELTLSIEDPAVPVRLEVYDKDTFIDDAMGNAELDIRPLVEVVKMKIEGVADNTVVKKVVPNRQNCLAEESTIYISEGKVKQDVVLRLRDVECGEIELQLQWVDIPGSKGV</sequence>
<dbReference type="EMBL" id="EF584506">
    <property type="protein sequence ID" value="ABU62827.1"/>
    <property type="molecule type" value="mRNA"/>
</dbReference>
<dbReference type="EMBL" id="AP004789">
    <property type="protein sequence ID" value="BAD15699.1"/>
    <property type="molecule type" value="Genomic_DNA"/>
</dbReference>
<dbReference type="EMBL" id="AP005778">
    <property type="protein sequence ID" value="BAD16390.1"/>
    <property type="molecule type" value="Genomic_DNA"/>
</dbReference>
<dbReference type="EMBL" id="AP008208">
    <property type="protein sequence ID" value="BAF08623.1"/>
    <property type="molecule type" value="Genomic_DNA"/>
</dbReference>
<dbReference type="EMBL" id="AP014958">
    <property type="protein sequence ID" value="BAS78417.1"/>
    <property type="molecule type" value="Genomic_DNA"/>
</dbReference>
<dbReference type="EMBL" id="CM000139">
    <property type="protein sequence ID" value="EAZ22831.1"/>
    <property type="molecule type" value="Genomic_DNA"/>
</dbReference>
<dbReference type="EMBL" id="AK073631">
    <property type="protein sequence ID" value="BAG93560.1"/>
    <property type="molecule type" value="mRNA"/>
</dbReference>
<dbReference type="EMBL" id="AK104165">
    <property type="protein sequence ID" value="BAG96469.1"/>
    <property type="molecule type" value="mRNA"/>
</dbReference>
<dbReference type="RefSeq" id="XP_015627601.1">
    <property type="nucleotide sequence ID" value="XM_015772115.1"/>
</dbReference>
<dbReference type="PDB" id="4RJ9">
    <property type="method" value="X-ray"/>
    <property type="resolution" value="1.63 A"/>
    <property type="chains" value="A=1-165"/>
</dbReference>
<dbReference type="PDBsum" id="4RJ9"/>
<dbReference type="SMR" id="Q6YWF1"/>
<dbReference type="FunCoup" id="Q6YWF1">
    <property type="interactions" value="79"/>
</dbReference>
<dbReference type="STRING" id="39947.Q6YWF1"/>
<dbReference type="PaxDb" id="39947-Q6YWF1"/>
<dbReference type="EnsemblPlants" id="Os02t0327000-01">
    <property type="protein sequence ID" value="Os02t0327000-01"/>
    <property type="gene ID" value="Os02g0327000"/>
</dbReference>
<dbReference type="EnsemblPlants" id="Os02t0327000-02">
    <property type="protein sequence ID" value="Os02t0327000-02"/>
    <property type="gene ID" value="Os02g0327000"/>
</dbReference>
<dbReference type="Gramene" id="Os02t0327000-01">
    <property type="protein sequence ID" value="Os02t0327000-01"/>
    <property type="gene ID" value="Os02g0327000"/>
</dbReference>
<dbReference type="Gramene" id="Os02t0327000-02">
    <property type="protein sequence ID" value="Os02t0327000-02"/>
    <property type="gene ID" value="Os02g0327000"/>
</dbReference>
<dbReference type="KEGG" id="dosa:Os02g0327000"/>
<dbReference type="eggNOG" id="KOG1030">
    <property type="taxonomic scope" value="Eukaryota"/>
</dbReference>
<dbReference type="HOGENOM" id="CLU_106037_0_0_1"/>
<dbReference type="InParanoid" id="Q6YWF1"/>
<dbReference type="OMA" id="NLPIMVC"/>
<dbReference type="OrthoDB" id="73919at2759"/>
<dbReference type="EvolutionaryTrace" id="Q6YWF1"/>
<dbReference type="Proteomes" id="UP000000763">
    <property type="component" value="Chromosome 2"/>
</dbReference>
<dbReference type="Proteomes" id="UP000007752">
    <property type="component" value="Chromosome 2"/>
</dbReference>
<dbReference type="Proteomes" id="UP000059680">
    <property type="component" value="Chromosome 2"/>
</dbReference>
<dbReference type="GO" id="GO:0005829">
    <property type="term" value="C:cytosol"/>
    <property type="evidence" value="ECO:0000314"/>
    <property type="project" value="UniProtKB"/>
</dbReference>
<dbReference type="GO" id="GO:0005634">
    <property type="term" value="C:nucleus"/>
    <property type="evidence" value="ECO:0007669"/>
    <property type="project" value="UniProtKB-SubCell"/>
</dbReference>
<dbReference type="GO" id="GO:0005886">
    <property type="term" value="C:plasma membrane"/>
    <property type="evidence" value="ECO:0007669"/>
    <property type="project" value="UniProtKB-SubCell"/>
</dbReference>
<dbReference type="GO" id="GO:0005096">
    <property type="term" value="F:GTPase activator activity"/>
    <property type="evidence" value="ECO:0000314"/>
    <property type="project" value="UniProtKB"/>
</dbReference>
<dbReference type="GO" id="GO:0008289">
    <property type="term" value="F:lipid binding"/>
    <property type="evidence" value="ECO:0007669"/>
    <property type="project" value="UniProtKB-KW"/>
</dbReference>
<dbReference type="GO" id="GO:0046872">
    <property type="term" value="F:metal ion binding"/>
    <property type="evidence" value="ECO:0007669"/>
    <property type="project" value="UniProtKB-KW"/>
</dbReference>
<dbReference type="GO" id="GO:0009738">
    <property type="term" value="P:abscisic acid-activated signaling pathway"/>
    <property type="evidence" value="ECO:0007669"/>
    <property type="project" value="UniProtKB-KW"/>
</dbReference>
<dbReference type="GO" id="GO:0006952">
    <property type="term" value="P:defense response"/>
    <property type="evidence" value="ECO:0007669"/>
    <property type="project" value="UniProtKB-KW"/>
</dbReference>
<dbReference type="GO" id="GO:1900426">
    <property type="term" value="P:positive regulation of defense response to bacterium"/>
    <property type="evidence" value="ECO:0000315"/>
    <property type="project" value="UniProtKB"/>
</dbReference>
<dbReference type="GO" id="GO:0043547">
    <property type="term" value="P:positive regulation of GTPase activity"/>
    <property type="evidence" value="ECO:0000314"/>
    <property type="project" value="UniProtKB"/>
</dbReference>
<dbReference type="GO" id="GO:1901002">
    <property type="term" value="P:positive regulation of response to salt stress"/>
    <property type="evidence" value="ECO:0000315"/>
    <property type="project" value="UniProtKB"/>
</dbReference>
<dbReference type="GO" id="GO:0009651">
    <property type="term" value="P:response to salt stress"/>
    <property type="evidence" value="ECO:0000314"/>
    <property type="project" value="UniProtKB"/>
</dbReference>
<dbReference type="GO" id="GO:0009611">
    <property type="term" value="P:response to wounding"/>
    <property type="evidence" value="ECO:0000270"/>
    <property type="project" value="UniProtKB"/>
</dbReference>
<dbReference type="CDD" id="cd04038">
    <property type="entry name" value="C2_ArfGAP"/>
    <property type="match status" value="1"/>
</dbReference>
<dbReference type="Gene3D" id="2.60.40.150">
    <property type="entry name" value="C2 domain"/>
    <property type="match status" value="1"/>
</dbReference>
<dbReference type="InterPro" id="IPR000008">
    <property type="entry name" value="C2_dom"/>
</dbReference>
<dbReference type="InterPro" id="IPR035892">
    <property type="entry name" value="C2_domain_sf"/>
</dbReference>
<dbReference type="InterPro" id="IPR044562">
    <property type="entry name" value="CAR1-11"/>
</dbReference>
<dbReference type="PANTHER" id="PTHR45933">
    <property type="entry name" value="PROTEIN C2-DOMAIN ABA-RELATED 4"/>
    <property type="match status" value="1"/>
</dbReference>
<dbReference type="PANTHER" id="PTHR45933:SF5">
    <property type="entry name" value="PROTEIN C2-DOMAIN ABA-RELATED 4"/>
    <property type="match status" value="1"/>
</dbReference>
<dbReference type="Pfam" id="PF00168">
    <property type="entry name" value="C2"/>
    <property type="match status" value="1"/>
</dbReference>
<dbReference type="SMART" id="SM00239">
    <property type="entry name" value="C2"/>
    <property type="match status" value="1"/>
</dbReference>
<dbReference type="SUPFAM" id="SSF49562">
    <property type="entry name" value="C2 domain (Calcium/lipid-binding domain, CaLB)"/>
    <property type="match status" value="1"/>
</dbReference>
<dbReference type="PROSITE" id="PS50004">
    <property type="entry name" value="C2"/>
    <property type="match status" value="1"/>
</dbReference>
<accession>Q6YWF1</accession>
<accession>A0A0N7KF73</accession>
<organism evidence="14">
    <name type="scientific">Oryza sativa subsp. japonica</name>
    <name type="common">Rice</name>
    <dbReference type="NCBI Taxonomy" id="39947"/>
    <lineage>
        <taxon>Eukaryota</taxon>
        <taxon>Viridiplantae</taxon>
        <taxon>Streptophyta</taxon>
        <taxon>Embryophyta</taxon>
        <taxon>Tracheophyta</taxon>
        <taxon>Spermatophyta</taxon>
        <taxon>Magnoliopsida</taxon>
        <taxon>Liliopsida</taxon>
        <taxon>Poales</taxon>
        <taxon>Poaceae</taxon>
        <taxon>BOP clade</taxon>
        <taxon>Oryzoideae</taxon>
        <taxon>Oryzeae</taxon>
        <taxon>Oryzinae</taxon>
        <taxon>Oryza</taxon>
        <taxon>Oryza sativa</taxon>
    </lineage>
</organism>
<gene>
    <name evidence="8" type="primary">GAP1</name>
    <name evidence="7" type="synonym">GPBP1</name>
    <name evidence="12" type="ordered locus">Os02g0327000</name>
    <name evidence="9" type="ordered locus">LOC_Os02g22130</name>
    <name evidence="13" type="ORF">OsJ_06508</name>
    <name evidence="11" type="ORF">OSJNBb0042G06.10</name>
    <name evidence="10" type="ORF">P0476C12.36</name>
</gene>
<feature type="chain" id="PRO_0000433309" description="GTPase activating protein 1">
    <location>
        <begin position="1"/>
        <end position="165"/>
    </location>
</feature>
<feature type="domain" description="C2" evidence="2">
    <location>
        <begin position="1"/>
        <end position="105"/>
    </location>
</feature>
<feature type="binding site" evidence="1">
    <location>
        <position position="22"/>
    </location>
    <ligand>
        <name>Ca(2+)</name>
        <dbReference type="ChEBI" id="CHEBI:29108"/>
        <label>1</label>
    </ligand>
</feature>
<feature type="binding site" evidence="1">
    <location>
        <position position="23"/>
    </location>
    <ligand>
        <name>Ca(2+)</name>
        <dbReference type="ChEBI" id="CHEBI:29108"/>
        <label>1</label>
    </ligand>
</feature>
<feature type="binding site" evidence="1">
    <location>
        <position position="23"/>
    </location>
    <ligand>
        <name>Ca(2+)</name>
        <dbReference type="ChEBI" id="CHEBI:29108"/>
        <label>2</label>
    </ligand>
</feature>
<feature type="binding site" evidence="1">
    <location>
        <position position="28"/>
    </location>
    <ligand>
        <name>Ca(2+)</name>
        <dbReference type="ChEBI" id="CHEBI:29108"/>
        <label>2</label>
    </ligand>
</feature>
<feature type="binding site" evidence="1">
    <location>
        <position position="74"/>
    </location>
    <ligand>
        <name>Ca(2+)</name>
        <dbReference type="ChEBI" id="CHEBI:29108"/>
        <label>1</label>
    </ligand>
</feature>
<feature type="binding site" evidence="1">
    <location>
        <position position="74"/>
    </location>
    <ligand>
        <name>Ca(2+)</name>
        <dbReference type="ChEBI" id="CHEBI:29108"/>
        <label>2</label>
    </ligand>
</feature>
<feature type="binding site" evidence="1">
    <location>
        <position position="75"/>
    </location>
    <ligand>
        <name>Ca(2+)</name>
        <dbReference type="ChEBI" id="CHEBI:29108"/>
        <label>2</label>
    </ligand>
</feature>
<feature type="binding site" evidence="1">
    <location>
        <position position="76"/>
    </location>
    <ligand>
        <name>Ca(2+)</name>
        <dbReference type="ChEBI" id="CHEBI:29108"/>
        <label>1</label>
    </ligand>
</feature>
<feature type="binding site" evidence="1">
    <location>
        <position position="76"/>
    </location>
    <ligand>
        <name>Ca(2+)</name>
        <dbReference type="ChEBI" id="CHEBI:29108"/>
        <label>2</label>
    </ligand>
</feature>
<feature type="binding site" evidence="1">
    <location>
        <position position="81"/>
    </location>
    <ligand>
        <name>Ca(2+)</name>
        <dbReference type="ChEBI" id="CHEBI:29108"/>
        <label>1</label>
    </ligand>
</feature>
<feature type="mutagenesis site" description="Abolishes binding to YCHF1, but no effect on phospholipid binding; when associated with A-8; A-58 and A-60." evidence="6">
    <original>L</original>
    <variation>A</variation>
    <location>
        <position position="5"/>
    </location>
</feature>
<feature type="mutagenesis site" description="Abolishes binding to YCHF1, but no effect on phospholipid binding; when associated with A-5; A-58 and A-60." evidence="6">
    <original>L</original>
    <variation>A</variation>
    <location>
        <position position="8"/>
    </location>
</feature>
<feature type="mutagenesis site" description="Abolishes phospholipid binding, but no effect on binding to YCHF1; when associated with A-28." evidence="6">
    <original>D</original>
    <variation>A</variation>
    <location>
        <position position="23"/>
    </location>
</feature>
<feature type="mutagenesis site" description="Abolishes phospholipid binding, but no effect on binding to YCHF1; when associated with A-23." evidence="6">
    <original>D</original>
    <variation>A</variation>
    <location>
        <position position="28"/>
    </location>
</feature>
<feature type="mutagenesis site" description="Abolishes binding to YCHF1, and partial loss of phospholipid binding; when associated with A-39; A-41 and A-43." evidence="6">
    <original>K</original>
    <variation>A</variation>
    <location>
        <position position="37"/>
    </location>
</feature>
<feature type="mutagenesis site" description="Abolishes binding to YCHF1, and partial loss of phospholipid binding; when associated with A-37; A-41 and A-43." evidence="6">
    <original>K</original>
    <variation>A</variation>
    <location>
        <position position="39"/>
    </location>
</feature>
<feature type="mutagenesis site" description="Abolishes binding to YCHF1, and partial loss of phospholipid binding; when associated with A-37; A-39 and A-43." evidence="6">
    <original>K</original>
    <variation>A</variation>
    <location>
        <position position="41"/>
    </location>
</feature>
<feature type="mutagenesis site" description="Abolishes binding to YCHF1, and partial loss of phospholipid binding; when associated with A-37; A-39 and A-41." evidence="6">
    <original>R</original>
    <variation>A</variation>
    <location>
        <position position="43"/>
    </location>
</feature>
<feature type="mutagenesis site" description="Abolishes binding to YCHF1, but no effect on phospholipid binding; when associated with A-5; A-8 and A-60." evidence="6">
    <original>T</original>
    <variation>A</variation>
    <location>
        <position position="58"/>
    </location>
</feature>
<feature type="mutagenesis site" description="Abolishes binding to YCHF1, but no effect on phospholipid binding; when associated with A-8; A-8 and A-58." evidence="6">
    <original>S</original>
    <variation>A</variation>
    <location>
        <position position="60"/>
    </location>
</feature>
<feature type="mutagenesis site" description="Abolishes phospholipid binding, but no effect on binding to YCHF1; when associated with A-119; A-123 and A-124." evidence="6">
    <original>R</original>
    <variation>A</variation>
    <location>
        <position position="117"/>
    </location>
</feature>
<feature type="mutagenesis site" description="Abolishes phospholipid binding, but no effect on binding to YCHF1; when associated with A-117; A-123 and A-124." evidence="6">
    <original>N</original>
    <variation>A</variation>
    <location>
        <position position="119"/>
    </location>
</feature>
<feature type="mutagenesis site" description="Abolishes phospholipid binding, but no effect on binding to YCHF1; when associated with A-117; A-119 and A-124." evidence="6">
    <original>E</original>
    <variation>A</variation>
    <location>
        <position position="123"/>
    </location>
</feature>
<feature type="mutagenesis site" description="Abolishes phospholipid binding, but no effect on binding to YCHF1; when associated with A-117; A-119 and A-123." evidence="6">
    <original>E</original>
    <variation>A</variation>
    <location>
        <position position="124"/>
    </location>
</feature>
<feature type="mutagenesis site" description="Abolishes phospholipid binding, but no effect on binding to YCHF1; when associated with A-143; A-146 and A-149." evidence="6">
    <original>R</original>
    <variation>A</variation>
    <location>
        <position position="141"/>
    </location>
</feature>
<feature type="mutagenesis site" description="Abolishes phospholipid binding, but no effect on binding to YCHF1; when associated with A-141; A-146 and A-149." evidence="6">
    <original>R</original>
    <variation>A</variation>
    <location>
        <position position="143"/>
    </location>
</feature>
<feature type="mutagenesis site" description="Abolishes phospholipid binding, but no effect on binding to YCHF1; when associated with A-141; A-143 and A-149." evidence="6">
    <original>E</original>
    <variation>A</variation>
    <location>
        <position position="146"/>
    </location>
</feature>
<feature type="mutagenesis site" description="Abolishes phospholipid binding, but no effect on binding to YCHF1; when associated with A-141; A-143 and A-146." evidence="6">
    <original>E</original>
    <variation>A</variation>
    <location>
        <position position="149"/>
    </location>
</feature>
<feature type="strand" evidence="15">
    <location>
        <begin position="7"/>
        <end position="18"/>
    </location>
</feature>
<feature type="strand" evidence="15">
    <location>
        <begin position="29"/>
        <end position="35"/>
    </location>
</feature>
<feature type="strand" evidence="15">
    <location>
        <begin position="38"/>
        <end position="41"/>
    </location>
</feature>
<feature type="strand" evidence="15">
    <location>
        <begin position="55"/>
        <end position="62"/>
    </location>
</feature>
<feature type="strand" evidence="15">
    <location>
        <begin position="68"/>
        <end position="74"/>
    </location>
</feature>
<feature type="strand" evidence="15">
    <location>
        <begin position="82"/>
        <end position="88"/>
    </location>
</feature>
<feature type="helix" evidence="15">
    <location>
        <begin position="91"/>
        <end position="97"/>
    </location>
</feature>
<feature type="strand" evidence="15">
    <location>
        <begin position="108"/>
        <end position="113"/>
    </location>
</feature>
<feature type="strand" evidence="15">
    <location>
        <begin position="117"/>
        <end position="119"/>
    </location>
</feature>
<feature type="strand" evidence="15">
    <location>
        <begin position="121"/>
        <end position="123"/>
    </location>
</feature>
<feature type="strand" evidence="15">
    <location>
        <begin position="125"/>
        <end position="130"/>
    </location>
</feature>
<feature type="strand" evidence="15">
    <location>
        <begin position="133"/>
        <end position="141"/>
    </location>
</feature>
<feature type="strand" evidence="15">
    <location>
        <begin position="143"/>
        <end position="147"/>
    </location>
</feature>
<feature type="strand" evidence="15">
    <location>
        <begin position="149"/>
        <end position="157"/>
    </location>
</feature>
<reference key="1">
    <citation type="journal article" date="2007" name="J. Exp. Bot.">
        <title>Expression of a RING-HC protein from rice improves resistance to Pseudomonas syringae pv. tomato DC3000 in transgenic Arabidopsis thaliana.</title>
        <authorList>
            <person name="Cheung M.-Y."/>
            <person name="Zeng N.-Y."/>
            <person name="Tong S.-W."/>
            <person name="Li F.W.-Y."/>
            <person name="Zhao K.-J."/>
            <person name="Zhang Q."/>
            <person name="Sun S.S.-M."/>
            <person name="Lam H.-M."/>
        </authorList>
    </citation>
    <scope>NUCLEOTIDE SEQUENCE [MRNA]</scope>
</reference>
<reference key="2">
    <citation type="journal article" date="2005" name="Nature">
        <title>The map-based sequence of the rice genome.</title>
        <authorList>
            <consortium name="International rice genome sequencing project (IRGSP)"/>
        </authorList>
    </citation>
    <scope>NUCLEOTIDE SEQUENCE [LARGE SCALE GENOMIC DNA]</scope>
    <source>
        <strain>cv. Nipponbare</strain>
    </source>
</reference>
<reference key="3">
    <citation type="journal article" date="2008" name="Nucleic Acids Res.">
        <title>The rice annotation project database (RAP-DB): 2008 update.</title>
        <authorList>
            <consortium name="The rice annotation project (RAP)"/>
        </authorList>
    </citation>
    <scope>GENOME REANNOTATION</scope>
    <source>
        <strain>cv. Nipponbare</strain>
    </source>
</reference>
<reference key="4">
    <citation type="journal article" date="2013" name="Rice">
        <title>Improvement of the Oryza sativa Nipponbare reference genome using next generation sequence and optical map data.</title>
        <authorList>
            <person name="Kawahara Y."/>
            <person name="de la Bastide M."/>
            <person name="Hamilton J.P."/>
            <person name="Kanamori H."/>
            <person name="McCombie W.R."/>
            <person name="Ouyang S."/>
            <person name="Schwartz D.C."/>
            <person name="Tanaka T."/>
            <person name="Wu J."/>
            <person name="Zhou S."/>
            <person name="Childs K.L."/>
            <person name="Davidson R.M."/>
            <person name="Lin H."/>
            <person name="Quesada-Ocampo L."/>
            <person name="Vaillancourt B."/>
            <person name="Sakai H."/>
            <person name="Lee S.S."/>
            <person name="Kim J."/>
            <person name="Numa H."/>
            <person name="Itoh T."/>
            <person name="Buell C.R."/>
            <person name="Matsumoto T."/>
        </authorList>
    </citation>
    <scope>GENOME REANNOTATION</scope>
    <source>
        <strain>cv. Nipponbare</strain>
    </source>
</reference>
<reference key="5">
    <citation type="journal article" date="2005" name="PLoS Biol.">
        <title>The genomes of Oryza sativa: a history of duplications.</title>
        <authorList>
            <person name="Yu J."/>
            <person name="Wang J."/>
            <person name="Lin W."/>
            <person name="Li S."/>
            <person name="Li H."/>
            <person name="Zhou J."/>
            <person name="Ni P."/>
            <person name="Dong W."/>
            <person name="Hu S."/>
            <person name="Zeng C."/>
            <person name="Zhang J."/>
            <person name="Zhang Y."/>
            <person name="Li R."/>
            <person name="Xu Z."/>
            <person name="Li S."/>
            <person name="Li X."/>
            <person name="Zheng H."/>
            <person name="Cong L."/>
            <person name="Lin L."/>
            <person name="Yin J."/>
            <person name="Geng J."/>
            <person name="Li G."/>
            <person name="Shi J."/>
            <person name="Liu J."/>
            <person name="Lv H."/>
            <person name="Li J."/>
            <person name="Wang J."/>
            <person name="Deng Y."/>
            <person name="Ran L."/>
            <person name="Shi X."/>
            <person name="Wang X."/>
            <person name="Wu Q."/>
            <person name="Li C."/>
            <person name="Ren X."/>
            <person name="Wang J."/>
            <person name="Wang X."/>
            <person name="Li D."/>
            <person name="Liu D."/>
            <person name="Zhang X."/>
            <person name="Ji Z."/>
            <person name="Zhao W."/>
            <person name="Sun Y."/>
            <person name="Zhang Z."/>
            <person name="Bao J."/>
            <person name="Han Y."/>
            <person name="Dong L."/>
            <person name="Ji J."/>
            <person name="Chen P."/>
            <person name="Wu S."/>
            <person name="Liu J."/>
            <person name="Xiao Y."/>
            <person name="Bu D."/>
            <person name="Tan J."/>
            <person name="Yang L."/>
            <person name="Ye C."/>
            <person name="Zhang J."/>
            <person name="Xu J."/>
            <person name="Zhou Y."/>
            <person name="Yu Y."/>
            <person name="Zhang B."/>
            <person name="Zhuang S."/>
            <person name="Wei H."/>
            <person name="Liu B."/>
            <person name="Lei M."/>
            <person name="Yu H."/>
            <person name="Li Y."/>
            <person name="Xu H."/>
            <person name="Wei S."/>
            <person name="He X."/>
            <person name="Fang L."/>
            <person name="Zhang Z."/>
            <person name="Zhang Y."/>
            <person name="Huang X."/>
            <person name="Su Z."/>
            <person name="Tong W."/>
            <person name="Li J."/>
            <person name="Tong Z."/>
            <person name="Li S."/>
            <person name="Ye J."/>
            <person name="Wang L."/>
            <person name="Fang L."/>
            <person name="Lei T."/>
            <person name="Chen C.-S."/>
            <person name="Chen H.-C."/>
            <person name="Xu Z."/>
            <person name="Li H."/>
            <person name="Huang H."/>
            <person name="Zhang F."/>
            <person name="Xu H."/>
            <person name="Li N."/>
            <person name="Zhao C."/>
            <person name="Li S."/>
            <person name="Dong L."/>
            <person name="Huang Y."/>
            <person name="Li L."/>
            <person name="Xi Y."/>
            <person name="Qi Q."/>
            <person name="Li W."/>
            <person name="Zhang B."/>
            <person name="Hu W."/>
            <person name="Zhang Y."/>
            <person name="Tian X."/>
            <person name="Jiao Y."/>
            <person name="Liang X."/>
            <person name="Jin J."/>
            <person name="Gao L."/>
            <person name="Zheng W."/>
            <person name="Hao B."/>
            <person name="Liu S.-M."/>
            <person name="Wang W."/>
            <person name="Yuan L."/>
            <person name="Cao M."/>
            <person name="McDermott J."/>
            <person name="Samudrala R."/>
            <person name="Wang J."/>
            <person name="Wong G.K.-S."/>
            <person name="Yang H."/>
        </authorList>
    </citation>
    <scope>NUCLEOTIDE SEQUENCE [LARGE SCALE GENOMIC DNA]</scope>
    <source>
        <strain>cv. Nipponbare</strain>
    </source>
</reference>
<reference key="6">
    <citation type="journal article" date="2003" name="Science">
        <title>Collection, mapping, and annotation of over 28,000 cDNA clones from japonica rice.</title>
        <authorList>
            <consortium name="The rice full-length cDNA consortium"/>
        </authorList>
    </citation>
    <scope>NUCLEOTIDE SEQUENCE [LARGE SCALE MRNA]</scope>
    <source>
        <strain>cv. Nipponbare</strain>
    </source>
</reference>
<reference key="7">
    <citation type="journal article" date="2008" name="New Phytol.">
        <title>Constitutive expression of a rice GTPase-activating protein induces defense responses.</title>
        <authorList>
            <person name="Cheung M.-Y."/>
            <person name="Zeng N.-Y."/>
            <person name="Tong S.-W."/>
            <person name="Li W.-Y."/>
            <person name="Xue Y."/>
            <person name="Zhao K.-J."/>
            <person name="Wang C."/>
            <person name="Zhang Q."/>
            <person name="Fu Y."/>
            <person name="Sun Z."/>
            <person name="Sun S.-S."/>
            <person name="Lam H.-M."/>
        </authorList>
    </citation>
    <scope>FUNCTION</scope>
    <scope>INDUCTION BY WOUNDING</scope>
    <scope>INTERACTION WITH YCHF1</scope>
    <source>
        <strain>cv. Aichi asahi</strain>
    </source>
</reference>
<reference key="8">
    <citation type="journal article" date="2010" name="J. Biol. Chem.">
        <title>An ancient P-loop GTPase in rice is regulated by a higher plant-specific regulatory protein.</title>
        <authorList>
            <person name="Cheung M.Y."/>
            <person name="Xue Y."/>
            <person name="Zhou L."/>
            <person name="Li M.W."/>
            <person name="Sun S.S."/>
            <person name="Lam H.M."/>
        </authorList>
    </citation>
    <scope>FUNCTION</scope>
    <scope>INTERACTION WITH YCHF1</scope>
    <scope>SUBCELLULAR LOCATION</scope>
</reference>
<reference key="9">
    <citation type="journal article" date="2013" name="Plant Cell Environ.">
        <title>The unconventional P-loop NTPase OsYchF1 and its regulator OsGAP1 play opposite roles in salinity stress tolerance.</title>
        <authorList>
            <person name="Cheung M.-Y."/>
            <person name="Li M.-W."/>
            <person name="Yung Y.-L."/>
            <person name="Wen C.-Q."/>
            <person name="Lam H.-M."/>
        </authorList>
    </citation>
    <scope>FUNCTION</scope>
    <scope>INTERACTION WITH YCHF1</scope>
    <scope>SUBCELLULAR LOCATION</scope>
</reference>
<reference key="10">
    <citation type="journal article" date="2015" name="J. Biol. Chem.">
        <title>Site-directed mutagenesis shows the significance of interactions with phospholipids and the G-protein OsYchF1 for the physiological functions of the rice GTPase-activating protein 1 (OsGAP1).</title>
        <authorList>
            <person name="Yung Y.L."/>
            <person name="Cheung M.Y."/>
            <person name="Miao R."/>
            <person name="Fong Y.H."/>
            <person name="Li K.P."/>
            <person name="Yu M.H."/>
            <person name="Chye M.L."/>
            <person name="Wong K.B."/>
            <person name="Lam H.M."/>
        </authorList>
    </citation>
    <scope>X-RAY CRYSTALLOGRAPHY (1.63 ANGSTROMS)</scope>
    <scope>FUNCTION</scope>
    <scope>MUTAGENESIS OF LEU-5; LEU-8; ASP-23; ASP-28; LYS-37; LYS-39; LYS-41; ARG-43; THR-58; SER-60; ARG-117; ASN-119; GLU-123; GLU-124; ARG-141; ARG-143; GLU-146 AND GLU-149</scope>
</reference>